<gene>
    <name type="primary">hprK</name>
</gene>
<protein>
    <recommendedName>
        <fullName>HPr kinase/phosphorylase</fullName>
        <shortName>HPrK/P</shortName>
        <ecNumber>2.7.11.-</ecNumber>
        <ecNumber>2.7.4.-</ecNumber>
    </recommendedName>
    <alternativeName>
        <fullName>HPr kinase/phosphatase</fullName>
    </alternativeName>
    <alternativeName>
        <fullName>HPr(Ser) kinase/phosphorylase</fullName>
    </alternativeName>
</protein>
<reference key="1">
    <citation type="journal article" date="2000" name="J. Bacteriol.">
        <title>Phosphorylation of HPr by the bifunctional HPr kinase/P-Ser-HPr phosphatase from Lactobacillus casei controls catabolite repression and inducer exclusion but not inducer expulsion.</title>
        <authorList>
            <person name="Dossonnet V."/>
            <person name="Monedero V."/>
            <person name="Zagorec M."/>
            <person name="Galinier A."/>
            <person name="Perez-Martinez G."/>
            <person name="Deutscher J."/>
        </authorList>
    </citation>
    <scope>NUCLEOTIDE SEQUENCE [GENOMIC DNA]</scope>
    <scope>CHARACTERIZATION</scope>
    <source>
        <strain>ATCC 393 / DSM 20011 / JCM 1134 / BCRC 10697 / CCUG 21451 / NBRC 15883 / NCIMB 11970 / NCDO 161 / WDCM 00100</strain>
    </source>
</reference>
<reference key="2">
    <citation type="journal article" date="2002" name="Proc. Natl. Acad. Sci. U.S.A.">
        <title>Pyrophosphate-producing protein dephosphorylation by HPr kinase/phosphorylase: a relic of early life?</title>
        <authorList>
            <person name="Mijakovic I."/>
            <person name="Poncet S."/>
            <person name="Galinier A."/>
            <person name="Monedero V."/>
            <person name="Fieulaine S."/>
            <person name="Janin J."/>
            <person name="Nessler S."/>
            <person name="Marquez J.A."/>
            <person name="Scheffzek K."/>
            <person name="Hasenbein S."/>
            <person name="Hengstenberg W."/>
            <person name="Deutscher J."/>
        </authorList>
    </citation>
    <scope>DEPHOSPHORYLATION REACTION MECHANISM</scope>
</reference>
<reference key="3">
    <citation type="journal article" date="2001" name="EMBO J.">
        <title>X-ray structure of HPr kinase: a bacterial protein kinase with a P-loop nucleotide-binding domain.</title>
        <authorList>
            <person name="Fieulaine S."/>
            <person name="Morera S."/>
            <person name="Poncet S."/>
            <person name="Monedero V."/>
            <person name="Gueguen-Chaignon V."/>
            <person name="Galinier A."/>
            <person name="Janin J."/>
            <person name="Deutscher J."/>
            <person name="Nessler S."/>
        </authorList>
    </citation>
    <scope>SUBUNIT</scope>
    <scope>X-RAY CRYSTALLOGRAPHY (2.8 ANGSTROMS) OF 135-307 IN COMPLEX WITH PHOSPHATE</scope>
</reference>
<reference key="4">
    <citation type="journal article" date="2002" name="Proc. Natl. Acad. Sci. U.S.A.">
        <title>X-ray structure of a bifunctional protein kinase in complex with its protein substrate HPr.</title>
        <authorList>
            <person name="Fieulaine S."/>
            <person name="Morera S."/>
            <person name="Poncet S."/>
            <person name="Mijakovic I."/>
            <person name="Galinier A."/>
            <person name="Janin J."/>
            <person name="Deutscher J."/>
            <person name="Nessler S."/>
        </authorList>
    </citation>
    <scope>X-RAY CRYSTALLOGRAPHY (2.8 ANGSTROMS) OF 128-319 IN COMPLEXES WITH B.SUBTILIS HPR AND B.SUBTILIS P-SER-HPR</scope>
</reference>
<feature type="chain" id="PRO_0000058959" description="HPr kinase/phosphorylase">
    <location>
        <begin position="1"/>
        <end position="319"/>
    </location>
</feature>
<feature type="region of interest" description="Important for the catalytic mechanism of both phosphorylation and dephosphorylation">
    <location>
        <begin position="203"/>
        <end position="212"/>
    </location>
</feature>
<feature type="region of interest" description="Important for the catalytic mechanism of dephosphorylation">
    <location>
        <begin position="266"/>
        <end position="271"/>
    </location>
</feature>
<feature type="active site">
    <location>
        <position position="140"/>
    </location>
</feature>
<feature type="active site">
    <location>
        <position position="161"/>
    </location>
</feature>
<feature type="active site" description="Proton acceptor; for phosphorylation activity. Proton donor; for dephosphorylation activity">
    <location>
        <position position="179"/>
    </location>
</feature>
<feature type="active site">
    <location>
        <position position="245"/>
    </location>
</feature>
<feature type="binding site" evidence="2">
    <location>
        <begin position="155"/>
        <end position="162"/>
    </location>
    <ligand>
        <name>ATP</name>
        <dbReference type="ChEBI" id="CHEBI:30616"/>
    </ligand>
</feature>
<feature type="binding site" evidence="2">
    <location>
        <position position="162"/>
    </location>
    <ligand>
        <name>Mg(2+)</name>
        <dbReference type="ChEBI" id="CHEBI:18420"/>
    </ligand>
</feature>
<feature type="binding site" evidence="2">
    <location>
        <position position="204"/>
    </location>
    <ligand>
        <name>Mg(2+)</name>
        <dbReference type="ChEBI" id="CHEBI:18420"/>
    </ligand>
</feature>
<feature type="strand" evidence="6">
    <location>
        <begin position="139"/>
        <end position="146"/>
    </location>
</feature>
<feature type="strand" evidence="6">
    <location>
        <begin position="149"/>
        <end position="154"/>
    </location>
</feature>
<feature type="turn" evidence="6">
    <location>
        <begin position="158"/>
        <end position="161"/>
    </location>
</feature>
<feature type="helix" evidence="6">
    <location>
        <begin position="162"/>
        <end position="169"/>
    </location>
</feature>
<feature type="turn" evidence="6">
    <location>
        <begin position="170"/>
        <end position="172"/>
    </location>
</feature>
<feature type="strand" evidence="6">
    <location>
        <begin position="174"/>
        <end position="185"/>
    </location>
</feature>
<feature type="strand" evidence="5">
    <location>
        <begin position="187"/>
        <end position="189"/>
    </location>
</feature>
<feature type="strand" evidence="6">
    <location>
        <begin position="191"/>
        <end position="194"/>
    </location>
</feature>
<feature type="strand" evidence="6">
    <location>
        <begin position="197"/>
        <end position="199"/>
    </location>
</feature>
<feature type="strand" evidence="6">
    <location>
        <begin position="202"/>
        <end position="205"/>
    </location>
</feature>
<feature type="turn" evidence="6">
    <location>
        <begin position="206"/>
        <end position="208"/>
    </location>
</feature>
<feature type="strand" evidence="6">
    <location>
        <begin position="209"/>
        <end position="212"/>
    </location>
</feature>
<feature type="helix" evidence="6">
    <location>
        <begin position="213"/>
        <end position="217"/>
    </location>
</feature>
<feature type="helix" evidence="5">
    <location>
        <begin position="219"/>
        <end position="221"/>
    </location>
</feature>
<feature type="strand" evidence="5">
    <location>
        <begin position="224"/>
        <end position="227"/>
    </location>
</feature>
<feature type="strand" evidence="6">
    <location>
        <begin position="230"/>
        <end position="234"/>
    </location>
</feature>
<feature type="strand" evidence="6">
    <location>
        <begin position="245"/>
        <end position="247"/>
    </location>
</feature>
<feature type="strand" evidence="6">
    <location>
        <begin position="250"/>
        <end position="257"/>
    </location>
</feature>
<feature type="strand" evidence="6">
    <location>
        <begin position="259"/>
        <end position="265"/>
    </location>
</feature>
<feature type="helix" evidence="6">
    <location>
        <begin position="273"/>
        <end position="287"/>
    </location>
</feature>
<feature type="turn" evidence="6">
    <location>
        <begin position="288"/>
        <end position="290"/>
    </location>
</feature>
<feature type="helix" evidence="6">
    <location>
        <begin position="293"/>
        <end position="306"/>
    </location>
</feature>
<comment type="function">
    <text>Catalyzes the ATP- as well as the pyrophosphate-dependent phosphorylation of 'Ser-46' in HPr, a phosphocarrier protein of the phosphoenolpyruvate-dependent sugar phosphotransferase system (PTS). HprK/P also catalyzes the pyrophosphate-producing, inorganic phosphate-dependent dephosphorylation (phosphorolysis) of seryl-phosphorylated HPr (P-Ser-HPr). The two antagonistic activities of HprK/P are regulated by several intracellular metabolites, which change their concentration in response to the absence or presence of rapidly metabolisable carbon sources (glucose, fructose, etc.) in the growth medium. Therefore, by controlling the phosphorylation state of HPr, HPrK/P is a sensor enzyme that plays a major role in the regulation of carbon metabolism and sugar transport: it mediates carbon catabolite repression (CCR), and regulates PTS-catalyzed carbohydrate uptake and inducer exclusion.</text>
</comment>
<comment type="catalytic activity">
    <reaction>
        <text>[HPr protein]-L-serine + ATP = [HPr protein]-O-phospho-L-serine + ADP + H(+)</text>
        <dbReference type="Rhea" id="RHEA:46600"/>
        <dbReference type="Rhea" id="RHEA-COMP:11602"/>
        <dbReference type="Rhea" id="RHEA-COMP:11603"/>
        <dbReference type="ChEBI" id="CHEBI:15378"/>
        <dbReference type="ChEBI" id="CHEBI:29999"/>
        <dbReference type="ChEBI" id="CHEBI:30616"/>
        <dbReference type="ChEBI" id="CHEBI:83421"/>
        <dbReference type="ChEBI" id="CHEBI:456216"/>
    </reaction>
</comment>
<comment type="catalytic activity">
    <reaction>
        <text>[HPr protein]-O-phospho-L-serine + phosphate + H(+) = [HPr protein]-L-serine + diphosphate</text>
        <dbReference type="Rhea" id="RHEA:46604"/>
        <dbReference type="Rhea" id="RHEA-COMP:11602"/>
        <dbReference type="Rhea" id="RHEA-COMP:11603"/>
        <dbReference type="ChEBI" id="CHEBI:15378"/>
        <dbReference type="ChEBI" id="CHEBI:29999"/>
        <dbReference type="ChEBI" id="CHEBI:33019"/>
        <dbReference type="ChEBI" id="CHEBI:43474"/>
        <dbReference type="ChEBI" id="CHEBI:83421"/>
    </reaction>
</comment>
<comment type="cofactor">
    <cofactor>
        <name>Mg(2+)</name>
        <dbReference type="ChEBI" id="CHEBI:18420"/>
    </cofactor>
</comment>
<comment type="activity regulation">
    <text>Kinase activity is slightly activated by fructose 1,6-bisphosphate (FBP), and inhibited by inorganic phosphate (Pi), but FBP prevents kinase inhibition by Pi. Dephosphorylation of P-Ser-HPr is slightly inhibited by FBP.</text>
</comment>
<comment type="subunit">
    <text evidence="1">Homohexamer, arranged as bilayered trimers. Six HPr molecules bind to the hexamer at sites that overlap two of its subunits.</text>
</comment>
<comment type="domain">
    <text evidence="2">The Walker A ATP-binding motif also binds Pi and PPi.</text>
</comment>
<comment type="miscellaneous">
    <text>The truncated form that consists of amino acids 128-319 exhibits in vitro enzymatic activities identical to those of the full-length protein, and also forms a hexamer.</text>
</comment>
<comment type="miscellaneous">
    <text>Both phosphorylation and phosphorolysis are carried out by the same active site and suggest a common mechanism for both reactions.</text>
</comment>
<comment type="similarity">
    <text evidence="2">Belongs to the HPrK/P family.</text>
</comment>
<comment type="caution">
    <text evidence="3 4">Was originally (PubMed:10762262) called HPr kinase/phosphatase, but P-Ser-HPr dephosphorylation was shown (PubMed:12359880) to follow a quite unique mechanism, in which Pi instead of H(2)O is used for the nucleophilic attack on the phosphoryl group. P-Ser-HPr dephosphorylation is therefore not a phosphohydrolysis but a phospho-phosphorolysis reaction, and the bifunctional enzyme was dubbed HPr kinase/phosphorylase.</text>
</comment>
<evidence type="ECO:0000269" key="1">
    <source>
    </source>
</evidence>
<evidence type="ECO:0000305" key="2"/>
<evidence type="ECO:0000305" key="3">
    <source>
    </source>
</evidence>
<evidence type="ECO:0000305" key="4">
    <source>
    </source>
</evidence>
<evidence type="ECO:0007829" key="5">
    <source>
        <dbReference type="PDB" id="1JB1"/>
    </source>
</evidence>
<evidence type="ECO:0007829" key="6">
    <source>
        <dbReference type="PDB" id="2QMH"/>
    </source>
</evidence>
<name>HPRK_LACCA</name>
<keyword id="KW-0002">3D-structure</keyword>
<keyword id="KW-0067">ATP-binding</keyword>
<keyword id="KW-0119">Carbohydrate metabolism</keyword>
<keyword id="KW-0418">Kinase</keyword>
<keyword id="KW-0460">Magnesium</keyword>
<keyword id="KW-0479">Metal-binding</keyword>
<keyword id="KW-0511">Multifunctional enzyme</keyword>
<keyword id="KW-0547">Nucleotide-binding</keyword>
<keyword id="KW-0723">Serine/threonine-protein kinase</keyword>
<keyword id="KW-0808">Transferase</keyword>
<accession>Q9RE09</accession>
<dbReference type="EC" id="2.7.11.-"/>
<dbReference type="EC" id="2.7.4.-"/>
<dbReference type="EMBL" id="Y18948">
    <property type="protein sequence ID" value="CAB65151.1"/>
    <property type="molecule type" value="Genomic_DNA"/>
</dbReference>
<dbReference type="PDB" id="1JB1">
    <property type="method" value="X-ray"/>
    <property type="resolution" value="2.80 A"/>
    <property type="chains" value="A=128-319"/>
</dbReference>
<dbReference type="PDB" id="1KKL">
    <property type="method" value="X-ray"/>
    <property type="resolution" value="2.80 A"/>
    <property type="chains" value="A/B/C=128-319"/>
</dbReference>
<dbReference type="PDB" id="1KKM">
    <property type="method" value="X-ray"/>
    <property type="resolution" value="2.80 A"/>
    <property type="chains" value="A/B/C=128-319"/>
</dbReference>
<dbReference type="PDB" id="2QMH">
    <property type="method" value="X-ray"/>
    <property type="resolution" value="2.60 A"/>
    <property type="chains" value="A/B/C/D/E/F/G/H/I/J/K/L=128-319"/>
</dbReference>
<dbReference type="PDBsum" id="1JB1"/>
<dbReference type="PDBsum" id="1KKL"/>
<dbReference type="PDBsum" id="1KKM"/>
<dbReference type="PDBsum" id="2QMH"/>
<dbReference type="SMR" id="Q9RE09"/>
<dbReference type="IntAct" id="Q9RE09">
    <property type="interactions" value="1"/>
</dbReference>
<dbReference type="STRING" id="1582.AAW28_02550"/>
<dbReference type="PATRIC" id="fig|1582.47.peg.1266"/>
<dbReference type="eggNOG" id="COG1493">
    <property type="taxonomic scope" value="Bacteria"/>
</dbReference>
<dbReference type="OMA" id="IFPGKNI"/>
<dbReference type="EvolutionaryTrace" id="Q9RE09"/>
<dbReference type="GO" id="GO:0005524">
    <property type="term" value="F:ATP binding"/>
    <property type="evidence" value="ECO:0007669"/>
    <property type="project" value="UniProtKB-UniRule"/>
</dbReference>
<dbReference type="GO" id="GO:0000287">
    <property type="term" value="F:magnesium ion binding"/>
    <property type="evidence" value="ECO:0007669"/>
    <property type="project" value="UniProtKB-UniRule"/>
</dbReference>
<dbReference type="GO" id="GO:0000155">
    <property type="term" value="F:phosphorelay sensor kinase activity"/>
    <property type="evidence" value="ECO:0007669"/>
    <property type="project" value="InterPro"/>
</dbReference>
<dbReference type="GO" id="GO:0004674">
    <property type="term" value="F:protein serine/threonine kinase activity"/>
    <property type="evidence" value="ECO:0007669"/>
    <property type="project" value="UniProtKB-KW"/>
</dbReference>
<dbReference type="GO" id="GO:0004712">
    <property type="term" value="F:protein serine/threonine/tyrosine kinase activity"/>
    <property type="evidence" value="ECO:0007669"/>
    <property type="project" value="UniProtKB-UniRule"/>
</dbReference>
<dbReference type="GO" id="GO:0006109">
    <property type="term" value="P:regulation of carbohydrate metabolic process"/>
    <property type="evidence" value="ECO:0007669"/>
    <property type="project" value="UniProtKB-UniRule"/>
</dbReference>
<dbReference type="CDD" id="cd01918">
    <property type="entry name" value="HprK_C"/>
    <property type="match status" value="1"/>
</dbReference>
<dbReference type="FunFam" id="3.40.50.300:FF:000174">
    <property type="entry name" value="HPr kinase/phosphorylase"/>
    <property type="match status" value="1"/>
</dbReference>
<dbReference type="Gene3D" id="3.40.1390.20">
    <property type="entry name" value="HprK N-terminal domain-like"/>
    <property type="match status" value="1"/>
</dbReference>
<dbReference type="Gene3D" id="3.40.50.300">
    <property type="entry name" value="P-loop containing nucleotide triphosphate hydrolases"/>
    <property type="match status" value="1"/>
</dbReference>
<dbReference type="HAMAP" id="MF_01249">
    <property type="entry name" value="HPr_kinase"/>
    <property type="match status" value="1"/>
</dbReference>
<dbReference type="InterPro" id="IPR003755">
    <property type="entry name" value="HPr(Ser)_kin/Pase"/>
</dbReference>
<dbReference type="InterPro" id="IPR011104">
    <property type="entry name" value="Hpr_kin/Pase_C"/>
</dbReference>
<dbReference type="InterPro" id="IPR011126">
    <property type="entry name" value="Hpr_kin/Pase_Hpr_N"/>
</dbReference>
<dbReference type="InterPro" id="IPR027417">
    <property type="entry name" value="P-loop_NTPase"/>
</dbReference>
<dbReference type="InterPro" id="IPR028979">
    <property type="entry name" value="Ser_kin/Pase_Hpr-like_N_sf"/>
</dbReference>
<dbReference type="NCBIfam" id="TIGR00679">
    <property type="entry name" value="hpr-ser"/>
    <property type="match status" value="1"/>
</dbReference>
<dbReference type="PANTHER" id="PTHR30305:SF1">
    <property type="entry name" value="HPR KINASE_PHOSPHORYLASE"/>
    <property type="match status" value="1"/>
</dbReference>
<dbReference type="PANTHER" id="PTHR30305">
    <property type="entry name" value="PROTEIN YJDM-RELATED"/>
    <property type="match status" value="1"/>
</dbReference>
<dbReference type="Pfam" id="PF07475">
    <property type="entry name" value="Hpr_kinase_C"/>
    <property type="match status" value="1"/>
</dbReference>
<dbReference type="Pfam" id="PF02603">
    <property type="entry name" value="Hpr_kinase_N"/>
    <property type="match status" value="1"/>
</dbReference>
<dbReference type="SUPFAM" id="SSF75138">
    <property type="entry name" value="HprK N-terminal domain-like"/>
    <property type="match status" value="1"/>
</dbReference>
<dbReference type="SUPFAM" id="SSF53795">
    <property type="entry name" value="PEP carboxykinase-like"/>
    <property type="match status" value="1"/>
</dbReference>
<sequence length="319" mass="35348">MADSVTVRQLVKATKLEVYSGEEYLDQRQVVLSDISRPGLELTGYFNYYPHERIQLFGRTEISFARNMSSEERLLILKRMATEDTPAFLVSRGLEAPAEMITAATAAHIPVLGSRLPTTRLSSLITEYLDSQLAERRSMHGVLVDIYGLGVLITGDSGVGKSETALELVQRGHRLIADDRVDVYQQDEQTIVGAAPPILSHLLEIRGLGIIDVMNLFGAGAVREDTTISLIVHLENWTPDKTFDRLGSGEQTQLIFDVPVPKITVPVKVGRNLAIIIEVAAMNFRAKSMGYDATKTFEKNLNHLIEHNEETDQNSSGDK</sequence>
<organism>
    <name type="scientific">Lacticaseibacillus casei</name>
    <name type="common">Lactobacillus casei</name>
    <dbReference type="NCBI Taxonomy" id="1582"/>
    <lineage>
        <taxon>Bacteria</taxon>
        <taxon>Bacillati</taxon>
        <taxon>Bacillota</taxon>
        <taxon>Bacilli</taxon>
        <taxon>Lactobacillales</taxon>
        <taxon>Lactobacillaceae</taxon>
        <taxon>Lacticaseibacillus</taxon>
    </lineage>
</organism>
<proteinExistence type="evidence at protein level"/>